<feature type="signal peptide" evidence="1">
    <location>
        <begin position="1"/>
        <end position="23"/>
    </location>
</feature>
<feature type="chain" id="PRO_0000414448" description="Lipid A acyltransferase PagP">
    <location>
        <begin position="24"/>
        <end position="189"/>
    </location>
</feature>
<feature type="active site" evidence="1">
    <location>
        <position position="61"/>
    </location>
</feature>
<feature type="active site" evidence="1">
    <location>
        <position position="104"/>
    </location>
</feature>
<feature type="active site" evidence="1">
    <location>
        <position position="105"/>
    </location>
</feature>
<feature type="site" description="Role in lipopolysaccharide recognition" evidence="1">
    <location>
        <position position="70"/>
    </location>
</feature>
<feature type="site" description="Role in the phospholipid gating" evidence="1">
    <location>
        <position position="175"/>
    </location>
</feature>
<name>PAGP_ERWT9</name>
<keyword id="KW-0012">Acyltransferase</keyword>
<keyword id="KW-0998">Cell outer membrane</keyword>
<keyword id="KW-0472">Membrane</keyword>
<keyword id="KW-1185">Reference proteome</keyword>
<keyword id="KW-0732">Signal</keyword>
<keyword id="KW-0808">Transferase</keyword>
<dbReference type="EC" id="2.3.1.251" evidence="1"/>
<dbReference type="EMBL" id="CU468135">
    <property type="protein sequence ID" value="CAO97409.1"/>
    <property type="status" value="ALT_INIT"/>
    <property type="molecule type" value="Genomic_DNA"/>
</dbReference>
<dbReference type="RefSeq" id="WP_042959032.1">
    <property type="nucleotide sequence ID" value="NC_010694.1"/>
</dbReference>
<dbReference type="SMR" id="B2VBK5"/>
<dbReference type="STRING" id="465817.ETA_23630"/>
<dbReference type="KEGG" id="eta:ETA_23630"/>
<dbReference type="eggNOG" id="ENOG502Z7SY">
    <property type="taxonomic scope" value="Bacteria"/>
</dbReference>
<dbReference type="HOGENOM" id="CLU_104099_0_0_6"/>
<dbReference type="OrthoDB" id="9156803at2"/>
<dbReference type="Proteomes" id="UP000001726">
    <property type="component" value="Chromosome"/>
</dbReference>
<dbReference type="GO" id="GO:0009279">
    <property type="term" value="C:cell outer membrane"/>
    <property type="evidence" value="ECO:0007669"/>
    <property type="project" value="UniProtKB-SubCell"/>
</dbReference>
<dbReference type="GO" id="GO:0016746">
    <property type="term" value="F:acyltransferase activity"/>
    <property type="evidence" value="ECO:0007669"/>
    <property type="project" value="UniProtKB-UniRule"/>
</dbReference>
<dbReference type="GO" id="GO:0009245">
    <property type="term" value="P:lipid A biosynthetic process"/>
    <property type="evidence" value="ECO:0007669"/>
    <property type="project" value="UniProtKB-UniRule"/>
</dbReference>
<dbReference type="FunFam" id="2.40.160.20:FF:000002">
    <property type="entry name" value="Lipid A palmitoyltransferase PagP"/>
    <property type="match status" value="1"/>
</dbReference>
<dbReference type="Gene3D" id="2.40.160.20">
    <property type="match status" value="1"/>
</dbReference>
<dbReference type="HAMAP" id="MF_00837">
    <property type="entry name" value="PagP_transferase"/>
    <property type="match status" value="1"/>
</dbReference>
<dbReference type="InterPro" id="IPR009746">
    <property type="entry name" value="LipidA_acyl_PagP"/>
</dbReference>
<dbReference type="InterPro" id="IPR011250">
    <property type="entry name" value="OMP/PagP_b-brl"/>
</dbReference>
<dbReference type="NCBIfam" id="NF008271">
    <property type="entry name" value="PRK11045.1"/>
    <property type="match status" value="1"/>
</dbReference>
<dbReference type="Pfam" id="PF07017">
    <property type="entry name" value="PagP"/>
    <property type="match status" value="1"/>
</dbReference>
<dbReference type="SUPFAM" id="SSF56925">
    <property type="entry name" value="OMPA-like"/>
    <property type="match status" value="1"/>
</dbReference>
<protein>
    <recommendedName>
        <fullName evidence="1">Lipid A acyltransferase PagP</fullName>
        <ecNumber evidence="1">2.3.1.251</ecNumber>
    </recommendedName>
    <alternativeName>
        <fullName evidence="1">Lipid A acylation protein</fullName>
    </alternativeName>
</protein>
<proteinExistence type="inferred from homology"/>
<reference key="1">
    <citation type="journal article" date="2008" name="Environ. Microbiol.">
        <title>The genome of Erwinia tasmaniensis strain Et1/99, a non-pathogenic bacterium in the genus Erwinia.</title>
        <authorList>
            <person name="Kube M."/>
            <person name="Migdoll A.M."/>
            <person name="Mueller I."/>
            <person name="Kuhl H."/>
            <person name="Beck A."/>
            <person name="Reinhardt R."/>
            <person name="Geider K."/>
        </authorList>
    </citation>
    <scope>NUCLEOTIDE SEQUENCE [LARGE SCALE GENOMIC DNA]</scope>
    <source>
        <strain>DSM 17950 / CFBP 7177 / CIP 109463 / NCPPB 4357 / Et1/99</strain>
    </source>
</reference>
<evidence type="ECO:0000255" key="1">
    <source>
        <dbReference type="HAMAP-Rule" id="MF_00837"/>
    </source>
</evidence>
<evidence type="ECO:0000305" key="2"/>
<organism>
    <name type="scientific">Erwinia tasmaniensis (strain DSM 17950 / CFBP 7177 / CIP 109463 / NCPPB 4357 / Et1/99)</name>
    <dbReference type="NCBI Taxonomy" id="465817"/>
    <lineage>
        <taxon>Bacteria</taxon>
        <taxon>Pseudomonadati</taxon>
        <taxon>Pseudomonadota</taxon>
        <taxon>Gammaproteobacteria</taxon>
        <taxon>Enterobacterales</taxon>
        <taxon>Erwiniaceae</taxon>
        <taxon>Erwinia</taxon>
    </lineage>
</organism>
<sequence length="189" mass="21794">MRLKLILYFLILSCYLGIGSARAATLMHGVANTWNSFSDNVSQTWNDPQTFDLYVPAVTWHNRWTYDSDKIDKYNERPWGAGGGISHYDEKGNWNGIYLMAFKDSFNKWEPIGGYGWEKTWRPLADPDFHLGLGYTAGVTMRDNWNYIPIPVLLPLASIGYGSATFQMTYIPGTYNNGNVYFAWLRWQF</sequence>
<accession>B2VBK5</accession>
<gene>
    <name evidence="1" type="primary">pagP</name>
    <name type="ordered locus">ETA_23630</name>
</gene>
<comment type="function">
    <text evidence="1">Transfers a fatty acid residue from the sn-1 position of a phospholipid to the N-linked hydroxyfatty acid chain on the proximal unit of lipid A or its precursors.</text>
</comment>
<comment type="catalytic activity">
    <reaction evidence="1">
        <text>a lipid A + a 1,2-diacyl-sn-glycero-3-phosphocholine = a hepta-acyl lipid A + a 2-acyl-sn-glycero-3-phosphocholine</text>
        <dbReference type="Rhea" id="RHEA:74275"/>
        <dbReference type="ChEBI" id="CHEBI:57643"/>
        <dbReference type="ChEBI" id="CHEBI:57875"/>
        <dbReference type="ChEBI" id="CHEBI:193141"/>
        <dbReference type="ChEBI" id="CHEBI:193142"/>
        <dbReference type="EC" id="2.3.1.251"/>
    </reaction>
</comment>
<comment type="catalytic activity">
    <reaction evidence="1">
        <text>a lipid IVA + a 1,2-diacyl-sn-glycero-3-phosphocholine = a lipid IVB + a 2-acyl-sn-glycero-3-phosphocholine</text>
        <dbReference type="Rhea" id="RHEA:74279"/>
        <dbReference type="ChEBI" id="CHEBI:57643"/>
        <dbReference type="ChEBI" id="CHEBI:57875"/>
        <dbReference type="ChEBI" id="CHEBI:176425"/>
        <dbReference type="ChEBI" id="CHEBI:193143"/>
        <dbReference type="EC" id="2.3.1.251"/>
    </reaction>
</comment>
<comment type="catalytic activity">
    <reaction evidence="1">
        <text>a lipid IIA + a 1,2-diacyl-sn-glycero-3-phosphocholine = a lipid IIB + a 2-acyl-sn-glycero-3-phosphocholine</text>
        <dbReference type="Rhea" id="RHEA:74283"/>
        <dbReference type="ChEBI" id="CHEBI:57643"/>
        <dbReference type="ChEBI" id="CHEBI:57875"/>
        <dbReference type="ChEBI" id="CHEBI:193144"/>
        <dbReference type="ChEBI" id="CHEBI:193145"/>
        <dbReference type="EC" id="2.3.1.251"/>
    </reaction>
</comment>
<comment type="subunit">
    <text evidence="1">Homodimer.</text>
</comment>
<comment type="subcellular location">
    <subcellularLocation>
        <location evidence="1">Cell outer membrane</location>
    </subcellularLocation>
</comment>
<comment type="similarity">
    <text evidence="1 2">Belongs to the lipid A palmitoyltransferase family.</text>
</comment>
<comment type="sequence caution" evidence="2">
    <conflict type="erroneous initiation">
        <sequence resource="EMBL-CDS" id="CAO97409"/>
    </conflict>
    <text>Extended N-terminus.</text>
</comment>